<keyword id="KW-1015">Disulfide bond</keyword>
<keyword id="KW-0872">Ion channel impairing toxin</keyword>
<keyword id="KW-0528">Neurotoxin</keyword>
<keyword id="KW-0964">Secreted</keyword>
<keyword id="KW-0800">Toxin</keyword>
<keyword id="KW-0738">Voltage-gated sodium channel impairing toxin</keyword>
<evidence type="ECO:0000250" key="1"/>
<evidence type="ECO:0000250" key="2">
    <source>
        <dbReference type="UniProtKB" id="Q7Z094"/>
    </source>
</evidence>
<evidence type="ECO:0000305" key="3"/>
<protein>
    <recommendedName>
        <fullName>Iota-conotoxin-like M11.5</fullName>
    </recommendedName>
</protein>
<feature type="chain" id="PRO_0000314090" description="Iota-conotoxin-like M11.5">
    <location>
        <begin position="1"/>
        <end position="42"/>
    </location>
</feature>
<feature type="disulfide bond" evidence="2">
    <location>
        <begin position="5"/>
        <end position="19"/>
    </location>
</feature>
<feature type="disulfide bond" evidence="2">
    <location>
        <begin position="12"/>
        <end position="22"/>
    </location>
</feature>
<feature type="disulfide bond" evidence="2">
    <location>
        <begin position="18"/>
        <end position="27"/>
    </location>
</feature>
<feature type="disulfide bond" evidence="2">
    <location>
        <begin position="21"/>
        <end position="36"/>
    </location>
</feature>
<dbReference type="SMR" id="P0C614"/>
<dbReference type="ConoServer" id="2807">
    <property type="toxin name" value="M11.5"/>
</dbReference>
<dbReference type="GO" id="GO:0005576">
    <property type="term" value="C:extracellular region"/>
    <property type="evidence" value="ECO:0007669"/>
    <property type="project" value="UniProtKB-SubCell"/>
</dbReference>
<dbReference type="GO" id="GO:0017080">
    <property type="term" value="F:sodium channel regulator activity"/>
    <property type="evidence" value="ECO:0007669"/>
    <property type="project" value="UniProtKB-KW"/>
</dbReference>
<dbReference type="GO" id="GO:0090729">
    <property type="term" value="F:toxin activity"/>
    <property type="evidence" value="ECO:0007669"/>
    <property type="project" value="UniProtKB-KW"/>
</dbReference>
<dbReference type="Gene3D" id="4.10.40.80">
    <property type="match status" value="1"/>
</dbReference>
<dbReference type="InterPro" id="IPR013141">
    <property type="entry name" value="Conotoxin-I_CS"/>
</dbReference>
<dbReference type="InterPro" id="IPR012624">
    <property type="entry name" value="Toxin_19"/>
</dbReference>
<dbReference type="Pfam" id="PF08088">
    <property type="entry name" value="Toxin_19"/>
    <property type="match status" value="1"/>
</dbReference>
<dbReference type="PROSITE" id="PS60019">
    <property type="entry name" value="I_CONOTOXIN"/>
    <property type="match status" value="1"/>
</dbReference>
<reference key="1">
    <citation type="journal article" date="2008" name="Toxicon">
        <title>I(1)-superfamily conotoxins and prediction of single D-amino acid occurrence.</title>
        <authorList>
            <person name="Buczek O."/>
            <person name="Jimenez E.C."/>
            <person name="Yoshikami D."/>
            <person name="Imperial J.S."/>
            <person name="Watkins M."/>
            <person name="Morrison A."/>
            <person name="Olivera B.M."/>
        </authorList>
    </citation>
    <scope>NUCLEOTIDE SEQUENCE [MRNA]</scope>
    <source>
        <tissue>Venom duct</tissue>
    </source>
</reference>
<sequence>GHVPCGKDGRKCGYHADCCNCCLSGICKPSTSWTGCSTSTFD</sequence>
<accession>P0C614</accession>
<organism>
    <name type="scientific">Conus magus</name>
    <name type="common">Magical cone</name>
    <dbReference type="NCBI Taxonomy" id="6492"/>
    <lineage>
        <taxon>Eukaryota</taxon>
        <taxon>Metazoa</taxon>
        <taxon>Spiralia</taxon>
        <taxon>Lophotrochozoa</taxon>
        <taxon>Mollusca</taxon>
        <taxon>Gastropoda</taxon>
        <taxon>Caenogastropoda</taxon>
        <taxon>Neogastropoda</taxon>
        <taxon>Conoidea</taxon>
        <taxon>Conidae</taxon>
        <taxon>Conus</taxon>
        <taxon>Pionoconus</taxon>
    </lineage>
</organism>
<proteinExistence type="evidence at transcript level"/>
<name>I1B5_CONMA</name>
<comment type="function">
    <text evidence="1">Iota-conotoxins bind to voltage-gated sodium channels (Nav) and act as agonists by shifting the voltage-dependence of activation to more hyperpolarized levels. Produces general excitatory symptoms (By similarity).</text>
</comment>
<comment type="subcellular location">
    <subcellularLocation>
        <location evidence="1">Secreted</location>
    </subcellularLocation>
</comment>
<comment type="tissue specificity">
    <text>Expressed by the venom duct.</text>
</comment>
<comment type="domain">
    <text>The cysteine framework is XI (C-C-CC-CC-C-C).</text>
</comment>
<comment type="similarity">
    <text evidence="3">Belongs to the conotoxin I1 superfamily.</text>
</comment>